<protein>
    <recommendedName>
        <fullName>Translocon-associated protein subunit delta</fullName>
        <shortName>TRAP-delta</shortName>
    </recommendedName>
    <alternativeName>
        <fullName>Signal sequence receptor subunit delta</fullName>
        <shortName>SSR-delta</shortName>
    </alternativeName>
</protein>
<gene>
    <name type="primary">SSR4</name>
</gene>
<evidence type="ECO:0000250" key="1"/>
<evidence type="ECO:0000250" key="2">
    <source>
        <dbReference type="UniProtKB" id="P51571"/>
    </source>
</evidence>
<evidence type="ECO:0000255" key="3"/>
<evidence type="ECO:0000305" key="4"/>
<feature type="signal peptide" evidence="3">
    <location>
        <begin position="1"/>
        <end position="23"/>
    </location>
</feature>
<feature type="chain" id="PRO_0000033294" description="Translocon-associated protein subunit delta">
    <location>
        <begin position="24"/>
        <end position="173"/>
    </location>
</feature>
<feature type="topological domain" description="Lumenal" evidence="3">
    <location>
        <begin position="24"/>
        <end position="144"/>
    </location>
</feature>
<feature type="transmembrane region" description="Helical" evidence="3">
    <location>
        <begin position="145"/>
        <end position="165"/>
    </location>
</feature>
<feature type="topological domain" description="Cytoplasmic" evidence="3">
    <location>
        <begin position="166"/>
        <end position="173"/>
    </location>
</feature>
<feature type="disulfide bond" evidence="1">
    <location>
        <begin position="26"/>
        <end position="57"/>
    </location>
</feature>
<feature type="cross-link" description="Glycyl lysine isopeptide (Lys-Gly) (interchain with G-Cter in ubiquitin)" evidence="2">
    <location>
        <position position="73"/>
    </location>
</feature>
<comment type="function">
    <text evidence="1">TRAP proteins are part of a complex whose function is to bind calcium to the ER membrane and thereby regulate the retention of ER resident proteins.</text>
</comment>
<comment type="subunit">
    <text evidence="1">Heterotetramer of TRAP-alpha, TRAP-beta, TRAP-delta and TRAP-gamma.</text>
</comment>
<comment type="subcellular location">
    <subcellularLocation>
        <location evidence="1">Endoplasmic reticulum membrane</location>
        <topology evidence="1">Single-pass type I membrane protein</topology>
    </subcellularLocation>
</comment>
<comment type="similarity">
    <text evidence="4">Belongs to the TRAP-delta family.</text>
</comment>
<comment type="sequence caution" evidence="4">
    <conflict type="erroneous initiation">
        <sequence resource="EMBL-CDS" id="CAH89831"/>
    </conflict>
</comment>
<proteinExistence type="evidence at transcript level"/>
<sequence length="173" mass="18999">MAAMASLGALALLLLSSLSRCSAEACLEPQITPSYYTTSDAVISTETVFIVEISLTCKNRVQNMALYADVGGKQFPVTRGQDVGRYQVSWSLDHKSAHAGTYEVRFFDEESYSLLRKAQRNNEDISIIPPLFTVSVDHRGTWNGPWVSTEVLAAAIGLVIYYLAFSAKSHIQA</sequence>
<organism>
    <name type="scientific">Pongo abelii</name>
    <name type="common">Sumatran orangutan</name>
    <name type="synonym">Pongo pygmaeus abelii</name>
    <dbReference type="NCBI Taxonomy" id="9601"/>
    <lineage>
        <taxon>Eukaryota</taxon>
        <taxon>Metazoa</taxon>
        <taxon>Chordata</taxon>
        <taxon>Craniata</taxon>
        <taxon>Vertebrata</taxon>
        <taxon>Euteleostomi</taxon>
        <taxon>Mammalia</taxon>
        <taxon>Eutheria</taxon>
        <taxon>Euarchontoglires</taxon>
        <taxon>Primates</taxon>
        <taxon>Haplorrhini</taxon>
        <taxon>Catarrhini</taxon>
        <taxon>Hominidae</taxon>
        <taxon>Pongo</taxon>
    </lineage>
</organism>
<accession>Q5REH6</accession>
<dbReference type="EMBL" id="CR857553">
    <property type="protein sequence ID" value="CAH89831.1"/>
    <property type="status" value="ALT_INIT"/>
    <property type="molecule type" value="mRNA"/>
</dbReference>
<dbReference type="RefSeq" id="NP_001127202.1">
    <property type="nucleotide sequence ID" value="NM_001133730.1"/>
</dbReference>
<dbReference type="SMR" id="Q5REH6"/>
<dbReference type="FunCoup" id="Q5REH6">
    <property type="interactions" value="1647"/>
</dbReference>
<dbReference type="STRING" id="9601.ENSPPYP00000023341"/>
<dbReference type="GeneID" id="100174257"/>
<dbReference type="KEGG" id="pon:100174257"/>
<dbReference type="CTD" id="6748"/>
<dbReference type="eggNOG" id="KOG4088">
    <property type="taxonomic scope" value="Eukaryota"/>
</dbReference>
<dbReference type="HOGENOM" id="CLU_100264_0_1_1"/>
<dbReference type="InParanoid" id="Q5REH6"/>
<dbReference type="OrthoDB" id="10055808at2759"/>
<dbReference type="Proteomes" id="UP000001595">
    <property type="component" value="Unplaced"/>
</dbReference>
<dbReference type="GO" id="GO:0005789">
    <property type="term" value="C:endoplasmic reticulum membrane"/>
    <property type="evidence" value="ECO:0007669"/>
    <property type="project" value="UniProtKB-SubCell"/>
</dbReference>
<dbReference type="InterPro" id="IPR008855">
    <property type="entry name" value="TRAP-delta"/>
</dbReference>
<dbReference type="PANTHER" id="PTHR12731:SF1">
    <property type="entry name" value="TRANSLOCON-ASSOCIATED PROTEIN SUBUNIT DELTA"/>
    <property type="match status" value="1"/>
</dbReference>
<dbReference type="PANTHER" id="PTHR12731">
    <property type="entry name" value="TRANSLOCON-ASSOCIATED PROTEIN, DELTA SUBUNIT"/>
    <property type="match status" value="1"/>
</dbReference>
<dbReference type="Pfam" id="PF05404">
    <property type="entry name" value="TRAP-delta"/>
    <property type="match status" value="1"/>
</dbReference>
<name>SSRD_PONAB</name>
<reference key="1">
    <citation type="submission" date="2004-11" db="EMBL/GenBank/DDBJ databases">
        <authorList>
            <consortium name="The German cDNA consortium"/>
        </authorList>
    </citation>
    <scope>NUCLEOTIDE SEQUENCE [LARGE SCALE MRNA]</scope>
    <source>
        <tissue>Kidney</tissue>
    </source>
</reference>
<keyword id="KW-1015">Disulfide bond</keyword>
<keyword id="KW-0256">Endoplasmic reticulum</keyword>
<keyword id="KW-1017">Isopeptide bond</keyword>
<keyword id="KW-0472">Membrane</keyword>
<keyword id="KW-1185">Reference proteome</keyword>
<keyword id="KW-0732">Signal</keyword>
<keyword id="KW-0812">Transmembrane</keyword>
<keyword id="KW-1133">Transmembrane helix</keyword>
<keyword id="KW-0832">Ubl conjugation</keyword>